<name>RNPH_HISS1</name>
<sequence length="238" mass="25814">MRPNARAINQPRPIKITRHYTKHAEGSVLVEFGETKVICTATVEDSVPRFLKGQGKGWVTAEYGMLPRSTHSRMQREAAKGKQGGRTMEIQRLIARSLRAMVDLEALGERAITLDCDVIQADGGTRTASITGACVALIDAINFLLKNGTLTTNPIKGLVAAISVGIVNGETVCDLEYVEDSIAETDMNVVMMEDGRMIEVQGTAEGEPFSHAELLTLLDLAKQGCEQLFVAQRVALAE</sequence>
<proteinExistence type="inferred from homology"/>
<protein>
    <recommendedName>
        <fullName evidence="1">Ribonuclease PH</fullName>
        <shortName evidence="1">RNase PH</shortName>
        <ecNumber evidence="1">2.7.7.56</ecNumber>
    </recommendedName>
    <alternativeName>
        <fullName evidence="1">tRNA nucleotidyltransferase</fullName>
    </alternativeName>
</protein>
<evidence type="ECO:0000255" key="1">
    <source>
        <dbReference type="HAMAP-Rule" id="MF_00564"/>
    </source>
</evidence>
<comment type="function">
    <text evidence="1">Phosphorolytic 3'-5' exoribonuclease that plays an important role in tRNA 3'-end maturation. Removes nucleotide residues following the 3'-CCA terminus of tRNAs; can also add nucleotides to the ends of RNA molecules by using nucleoside diphosphates as substrates, but this may not be physiologically important. Probably plays a role in initiation of 16S rRNA degradation (leading to ribosome degradation) during starvation.</text>
</comment>
<comment type="catalytic activity">
    <reaction evidence="1">
        <text>tRNA(n+1) + phosphate = tRNA(n) + a ribonucleoside 5'-diphosphate</text>
        <dbReference type="Rhea" id="RHEA:10628"/>
        <dbReference type="Rhea" id="RHEA-COMP:17343"/>
        <dbReference type="Rhea" id="RHEA-COMP:17344"/>
        <dbReference type="ChEBI" id="CHEBI:43474"/>
        <dbReference type="ChEBI" id="CHEBI:57930"/>
        <dbReference type="ChEBI" id="CHEBI:173114"/>
        <dbReference type="EC" id="2.7.7.56"/>
    </reaction>
</comment>
<comment type="subunit">
    <text evidence="1">Homohexameric ring arranged as a trimer of dimers.</text>
</comment>
<comment type="similarity">
    <text evidence="1">Belongs to the RNase PH family.</text>
</comment>
<keyword id="KW-0548">Nucleotidyltransferase</keyword>
<keyword id="KW-0694">RNA-binding</keyword>
<keyword id="KW-0698">rRNA processing</keyword>
<keyword id="KW-0808">Transferase</keyword>
<keyword id="KW-0819">tRNA processing</keyword>
<keyword id="KW-0820">tRNA-binding</keyword>
<dbReference type="EC" id="2.7.7.56" evidence="1"/>
<dbReference type="EMBL" id="CP000436">
    <property type="protein sequence ID" value="ABI25567.1"/>
    <property type="molecule type" value="Genomic_DNA"/>
</dbReference>
<dbReference type="SMR" id="Q0I4U1"/>
<dbReference type="KEGG" id="hso:HS_1292"/>
<dbReference type="eggNOG" id="COG0689">
    <property type="taxonomic scope" value="Bacteria"/>
</dbReference>
<dbReference type="HOGENOM" id="CLU_050858_0_0_6"/>
<dbReference type="GO" id="GO:0000175">
    <property type="term" value="F:3'-5'-RNA exonuclease activity"/>
    <property type="evidence" value="ECO:0007669"/>
    <property type="project" value="UniProtKB-UniRule"/>
</dbReference>
<dbReference type="GO" id="GO:0000049">
    <property type="term" value="F:tRNA binding"/>
    <property type="evidence" value="ECO:0007669"/>
    <property type="project" value="UniProtKB-UniRule"/>
</dbReference>
<dbReference type="GO" id="GO:0009022">
    <property type="term" value="F:tRNA nucleotidyltransferase activity"/>
    <property type="evidence" value="ECO:0007669"/>
    <property type="project" value="UniProtKB-UniRule"/>
</dbReference>
<dbReference type="GO" id="GO:0016075">
    <property type="term" value="P:rRNA catabolic process"/>
    <property type="evidence" value="ECO:0007669"/>
    <property type="project" value="UniProtKB-UniRule"/>
</dbReference>
<dbReference type="GO" id="GO:0006364">
    <property type="term" value="P:rRNA processing"/>
    <property type="evidence" value="ECO:0007669"/>
    <property type="project" value="UniProtKB-KW"/>
</dbReference>
<dbReference type="GO" id="GO:0008033">
    <property type="term" value="P:tRNA processing"/>
    <property type="evidence" value="ECO:0007669"/>
    <property type="project" value="UniProtKB-UniRule"/>
</dbReference>
<dbReference type="CDD" id="cd11362">
    <property type="entry name" value="RNase_PH_bact"/>
    <property type="match status" value="1"/>
</dbReference>
<dbReference type="FunFam" id="3.30.230.70:FF:000003">
    <property type="entry name" value="Ribonuclease PH"/>
    <property type="match status" value="1"/>
</dbReference>
<dbReference type="Gene3D" id="3.30.230.70">
    <property type="entry name" value="GHMP Kinase, N-terminal domain"/>
    <property type="match status" value="1"/>
</dbReference>
<dbReference type="HAMAP" id="MF_00564">
    <property type="entry name" value="RNase_PH"/>
    <property type="match status" value="1"/>
</dbReference>
<dbReference type="InterPro" id="IPR001247">
    <property type="entry name" value="ExoRNase_PH_dom1"/>
</dbReference>
<dbReference type="InterPro" id="IPR015847">
    <property type="entry name" value="ExoRNase_PH_dom2"/>
</dbReference>
<dbReference type="InterPro" id="IPR036345">
    <property type="entry name" value="ExoRNase_PH_dom2_sf"/>
</dbReference>
<dbReference type="InterPro" id="IPR027408">
    <property type="entry name" value="PNPase/RNase_PH_dom_sf"/>
</dbReference>
<dbReference type="InterPro" id="IPR020568">
    <property type="entry name" value="Ribosomal_Su5_D2-typ_SF"/>
</dbReference>
<dbReference type="InterPro" id="IPR050080">
    <property type="entry name" value="RNase_PH"/>
</dbReference>
<dbReference type="InterPro" id="IPR002381">
    <property type="entry name" value="RNase_PH_bac-type"/>
</dbReference>
<dbReference type="InterPro" id="IPR018336">
    <property type="entry name" value="RNase_PH_CS"/>
</dbReference>
<dbReference type="NCBIfam" id="TIGR01966">
    <property type="entry name" value="RNasePH"/>
    <property type="match status" value="1"/>
</dbReference>
<dbReference type="PANTHER" id="PTHR11953">
    <property type="entry name" value="EXOSOME COMPLEX COMPONENT"/>
    <property type="match status" value="1"/>
</dbReference>
<dbReference type="PANTHER" id="PTHR11953:SF0">
    <property type="entry name" value="EXOSOME COMPLEX COMPONENT RRP41"/>
    <property type="match status" value="1"/>
</dbReference>
<dbReference type="Pfam" id="PF01138">
    <property type="entry name" value="RNase_PH"/>
    <property type="match status" value="1"/>
</dbReference>
<dbReference type="Pfam" id="PF03725">
    <property type="entry name" value="RNase_PH_C"/>
    <property type="match status" value="1"/>
</dbReference>
<dbReference type="SUPFAM" id="SSF55666">
    <property type="entry name" value="Ribonuclease PH domain 2-like"/>
    <property type="match status" value="1"/>
</dbReference>
<dbReference type="SUPFAM" id="SSF54211">
    <property type="entry name" value="Ribosomal protein S5 domain 2-like"/>
    <property type="match status" value="1"/>
</dbReference>
<dbReference type="PROSITE" id="PS01277">
    <property type="entry name" value="RIBONUCLEASE_PH"/>
    <property type="match status" value="1"/>
</dbReference>
<organism>
    <name type="scientific">Histophilus somni (strain 129Pt)</name>
    <name type="common">Haemophilus somnus</name>
    <dbReference type="NCBI Taxonomy" id="205914"/>
    <lineage>
        <taxon>Bacteria</taxon>
        <taxon>Pseudomonadati</taxon>
        <taxon>Pseudomonadota</taxon>
        <taxon>Gammaproteobacteria</taxon>
        <taxon>Pasteurellales</taxon>
        <taxon>Pasteurellaceae</taxon>
        <taxon>Histophilus</taxon>
    </lineage>
</organism>
<accession>Q0I4U1</accession>
<feature type="chain" id="PRO_1000024817" description="Ribonuclease PH">
    <location>
        <begin position="1"/>
        <end position="238"/>
    </location>
</feature>
<feature type="binding site" evidence="1">
    <location>
        <position position="86"/>
    </location>
    <ligand>
        <name>phosphate</name>
        <dbReference type="ChEBI" id="CHEBI:43474"/>
        <note>substrate</note>
    </ligand>
</feature>
<feature type="binding site" evidence="1">
    <location>
        <begin position="124"/>
        <end position="126"/>
    </location>
    <ligand>
        <name>phosphate</name>
        <dbReference type="ChEBI" id="CHEBI:43474"/>
        <note>substrate</note>
    </ligand>
</feature>
<reference key="1">
    <citation type="journal article" date="2007" name="J. Bacteriol.">
        <title>Complete genome sequence of Haemophilus somnus (Histophilus somni) strain 129Pt and comparison to Haemophilus ducreyi 35000HP and Haemophilus influenzae Rd.</title>
        <authorList>
            <person name="Challacombe J.F."/>
            <person name="Duncan A.J."/>
            <person name="Brettin T.S."/>
            <person name="Bruce D."/>
            <person name="Chertkov O."/>
            <person name="Detter J.C."/>
            <person name="Han C.S."/>
            <person name="Misra M."/>
            <person name="Richardson P."/>
            <person name="Tapia R."/>
            <person name="Thayer N."/>
            <person name="Xie G."/>
            <person name="Inzana T.J."/>
        </authorList>
    </citation>
    <scope>NUCLEOTIDE SEQUENCE [LARGE SCALE GENOMIC DNA]</scope>
    <source>
        <strain>129Pt</strain>
    </source>
</reference>
<gene>
    <name evidence="1" type="primary">rph</name>
    <name type="ordered locus">HS_1292</name>
</gene>